<evidence type="ECO:0000255" key="1">
    <source>
        <dbReference type="HAMAP-Rule" id="MF_01586"/>
    </source>
</evidence>
<dbReference type="EMBL" id="AM286415">
    <property type="protein sequence ID" value="CAL14017.1"/>
    <property type="molecule type" value="Genomic_DNA"/>
</dbReference>
<dbReference type="RefSeq" id="WP_005174747.1">
    <property type="nucleotide sequence ID" value="NC_008800.1"/>
</dbReference>
<dbReference type="RefSeq" id="YP_001008143.1">
    <property type="nucleotide sequence ID" value="NC_008800.1"/>
</dbReference>
<dbReference type="SMR" id="A1JSG1"/>
<dbReference type="KEGG" id="yen:YE3997"/>
<dbReference type="PATRIC" id="fig|393305.7.peg.4255"/>
<dbReference type="eggNOG" id="ENOG50330S2">
    <property type="taxonomic scope" value="Bacteria"/>
</dbReference>
<dbReference type="HOGENOM" id="CLU_189182_0_0_6"/>
<dbReference type="OrthoDB" id="6903254at2"/>
<dbReference type="Proteomes" id="UP000000642">
    <property type="component" value="Chromosome"/>
</dbReference>
<dbReference type="GO" id="GO:0003677">
    <property type="term" value="F:DNA binding"/>
    <property type="evidence" value="ECO:0007669"/>
    <property type="project" value="UniProtKB-KW"/>
</dbReference>
<dbReference type="GO" id="GO:0005506">
    <property type="term" value="F:iron ion binding"/>
    <property type="evidence" value="ECO:0007669"/>
    <property type="project" value="UniProtKB-UniRule"/>
</dbReference>
<dbReference type="GO" id="GO:0051536">
    <property type="term" value="F:iron-sulfur cluster binding"/>
    <property type="evidence" value="ECO:0007669"/>
    <property type="project" value="UniProtKB-KW"/>
</dbReference>
<dbReference type="Gene3D" id="1.10.10.10">
    <property type="entry name" value="Winged helix-like DNA-binding domain superfamily/Winged helix DNA-binding domain"/>
    <property type="match status" value="1"/>
</dbReference>
<dbReference type="HAMAP" id="MF_01586">
    <property type="entry name" value="FeoC"/>
    <property type="match status" value="1"/>
</dbReference>
<dbReference type="InterPro" id="IPR023732">
    <property type="entry name" value="FeoC"/>
</dbReference>
<dbReference type="InterPro" id="IPR015102">
    <property type="entry name" value="Tscrpt_reg_HTH_FeoC"/>
</dbReference>
<dbReference type="InterPro" id="IPR036388">
    <property type="entry name" value="WH-like_DNA-bd_sf"/>
</dbReference>
<dbReference type="InterPro" id="IPR036390">
    <property type="entry name" value="WH_DNA-bd_sf"/>
</dbReference>
<dbReference type="Pfam" id="PF09012">
    <property type="entry name" value="FeoC"/>
    <property type="match status" value="1"/>
</dbReference>
<dbReference type="SUPFAM" id="SSF46785">
    <property type="entry name" value="Winged helix' DNA-binding domain"/>
    <property type="match status" value="1"/>
</dbReference>
<gene>
    <name evidence="1" type="primary">feoC</name>
    <name type="ordered locus">YE3997</name>
</gene>
<sequence>MASLVQLRDAIALSGSADANQLSHQLAMPLPLVEAMLEKLTAMGKIERIEQDNSGCLTGSCKSCPEGKNQCSTVIYQLKNHR</sequence>
<feature type="chain" id="PRO_0000313073" description="Probable [Fe-S]-dependent transcriptional repressor">
    <location>
        <begin position="1"/>
        <end position="82"/>
    </location>
</feature>
<feature type="binding site" evidence="1">
    <location>
        <position position="56"/>
    </location>
    <ligand>
        <name>iron-sulfur cluster</name>
        <dbReference type="ChEBI" id="CHEBI:30408"/>
    </ligand>
</feature>
<feature type="binding site" evidence="1">
    <location>
        <position position="61"/>
    </location>
    <ligand>
        <name>iron-sulfur cluster</name>
        <dbReference type="ChEBI" id="CHEBI:30408"/>
    </ligand>
</feature>
<feature type="binding site" evidence="1">
    <location>
        <position position="64"/>
    </location>
    <ligand>
        <name>iron-sulfur cluster</name>
        <dbReference type="ChEBI" id="CHEBI:30408"/>
    </ligand>
</feature>
<feature type="binding site" evidence="1">
    <location>
        <position position="71"/>
    </location>
    <ligand>
        <name>iron-sulfur cluster</name>
        <dbReference type="ChEBI" id="CHEBI:30408"/>
    </ligand>
</feature>
<accession>A1JSG1</accession>
<comment type="function">
    <text evidence="1">May function as a transcriptional regulator that controls feoABC expression.</text>
</comment>
<comment type="similarity">
    <text evidence="1">Belongs to the FeoC family.</text>
</comment>
<organism>
    <name type="scientific">Yersinia enterocolitica serotype O:8 / biotype 1B (strain NCTC 13174 / 8081)</name>
    <dbReference type="NCBI Taxonomy" id="393305"/>
    <lineage>
        <taxon>Bacteria</taxon>
        <taxon>Pseudomonadati</taxon>
        <taxon>Pseudomonadota</taxon>
        <taxon>Gammaproteobacteria</taxon>
        <taxon>Enterobacterales</taxon>
        <taxon>Yersiniaceae</taxon>
        <taxon>Yersinia</taxon>
    </lineage>
</organism>
<protein>
    <recommendedName>
        <fullName evidence="1">Probable [Fe-S]-dependent transcriptional repressor</fullName>
    </recommendedName>
</protein>
<name>FEOC_YERE8</name>
<proteinExistence type="inferred from homology"/>
<reference key="1">
    <citation type="journal article" date="2006" name="PLoS Genet.">
        <title>The complete genome sequence and comparative genome analysis of the high pathogenicity Yersinia enterocolitica strain 8081.</title>
        <authorList>
            <person name="Thomson N.R."/>
            <person name="Howard S."/>
            <person name="Wren B.W."/>
            <person name="Holden M.T.G."/>
            <person name="Crossman L."/>
            <person name="Challis G.L."/>
            <person name="Churcher C."/>
            <person name="Mungall K."/>
            <person name="Brooks K."/>
            <person name="Chillingworth T."/>
            <person name="Feltwell T."/>
            <person name="Abdellah Z."/>
            <person name="Hauser H."/>
            <person name="Jagels K."/>
            <person name="Maddison M."/>
            <person name="Moule S."/>
            <person name="Sanders M."/>
            <person name="Whitehead S."/>
            <person name="Quail M.A."/>
            <person name="Dougan G."/>
            <person name="Parkhill J."/>
            <person name="Prentice M.B."/>
        </authorList>
    </citation>
    <scope>NUCLEOTIDE SEQUENCE [LARGE SCALE GENOMIC DNA]</scope>
    <source>
        <strain>NCTC 13174 / 8081</strain>
    </source>
</reference>
<keyword id="KW-0238">DNA-binding</keyword>
<keyword id="KW-0408">Iron</keyword>
<keyword id="KW-0411">Iron-sulfur</keyword>
<keyword id="KW-0479">Metal-binding</keyword>
<keyword id="KW-0678">Repressor</keyword>
<keyword id="KW-0804">Transcription</keyword>
<keyword id="KW-0805">Transcription regulation</keyword>